<comment type="function">
    <text evidence="1">One of the essential components for the initiation of protein synthesis. Stabilizes the binding of IF-2 and IF-3 on the 30S subunit to which N-formylmethionyl-tRNA(fMet) subsequently binds. Helps modulate mRNA selection, yielding the 30S pre-initiation complex (PIC). Upon addition of the 50S ribosomal subunit IF-1, IF-2 and IF-3 are released leaving the mature 70S translation initiation complex.</text>
</comment>
<comment type="subunit">
    <text evidence="1">Component of the 30S ribosomal translation pre-initiation complex which assembles on the 30S ribosome in the order IF-2 and IF-3, IF-1 and N-formylmethionyl-tRNA(fMet); mRNA recruitment can occur at any time during PIC assembly.</text>
</comment>
<comment type="subcellular location">
    <subcellularLocation>
        <location evidence="1">Cytoplasm</location>
    </subcellularLocation>
</comment>
<comment type="similarity">
    <text evidence="1">Belongs to the IF-1 family.</text>
</comment>
<feature type="chain" id="PRO_0000338774" description="Translation initiation factor IF-1">
    <location>
        <begin position="1"/>
        <end position="72"/>
    </location>
</feature>
<feature type="domain" description="S1-like" evidence="1">
    <location>
        <begin position="1"/>
        <end position="72"/>
    </location>
</feature>
<proteinExistence type="inferred from homology"/>
<sequence length="72" mass="8372">MAKEEVLEFPGVVTELLPNAMFRVKLENEHEIIAHTAGRMRKNRIRVLAGDKVLVEMTPYDLTKGRITYRFK</sequence>
<protein>
    <recommendedName>
        <fullName evidence="1">Translation initiation factor IF-1</fullName>
    </recommendedName>
</protein>
<gene>
    <name evidence="1" type="primary">infA</name>
    <name type="ordered locus">BSUIS_A0272</name>
</gene>
<accession>B0CJM7</accession>
<dbReference type="EMBL" id="CP000911">
    <property type="protein sequence ID" value="ABY37368.1"/>
    <property type="molecule type" value="Genomic_DNA"/>
</dbReference>
<dbReference type="RefSeq" id="WP_002965531.1">
    <property type="nucleotide sequence ID" value="NC_010169.1"/>
</dbReference>
<dbReference type="SMR" id="B0CJM7"/>
<dbReference type="GeneID" id="97534350"/>
<dbReference type="KEGG" id="bmt:BSUIS_A0272"/>
<dbReference type="HOGENOM" id="CLU_151267_1_0_5"/>
<dbReference type="Proteomes" id="UP000008545">
    <property type="component" value="Chromosome I"/>
</dbReference>
<dbReference type="GO" id="GO:0005829">
    <property type="term" value="C:cytosol"/>
    <property type="evidence" value="ECO:0007669"/>
    <property type="project" value="TreeGrafter"/>
</dbReference>
<dbReference type="GO" id="GO:0043022">
    <property type="term" value="F:ribosome binding"/>
    <property type="evidence" value="ECO:0007669"/>
    <property type="project" value="UniProtKB-UniRule"/>
</dbReference>
<dbReference type="GO" id="GO:0019843">
    <property type="term" value="F:rRNA binding"/>
    <property type="evidence" value="ECO:0007669"/>
    <property type="project" value="UniProtKB-UniRule"/>
</dbReference>
<dbReference type="GO" id="GO:0003743">
    <property type="term" value="F:translation initiation factor activity"/>
    <property type="evidence" value="ECO:0007669"/>
    <property type="project" value="UniProtKB-UniRule"/>
</dbReference>
<dbReference type="CDD" id="cd04451">
    <property type="entry name" value="S1_IF1"/>
    <property type="match status" value="1"/>
</dbReference>
<dbReference type="FunFam" id="2.40.50.140:FF:000002">
    <property type="entry name" value="Translation initiation factor IF-1"/>
    <property type="match status" value="1"/>
</dbReference>
<dbReference type="Gene3D" id="2.40.50.140">
    <property type="entry name" value="Nucleic acid-binding proteins"/>
    <property type="match status" value="1"/>
</dbReference>
<dbReference type="HAMAP" id="MF_00075">
    <property type="entry name" value="IF_1"/>
    <property type="match status" value="1"/>
</dbReference>
<dbReference type="InterPro" id="IPR012340">
    <property type="entry name" value="NA-bd_OB-fold"/>
</dbReference>
<dbReference type="InterPro" id="IPR006196">
    <property type="entry name" value="RNA-binding_domain_S1_IF1"/>
</dbReference>
<dbReference type="InterPro" id="IPR003029">
    <property type="entry name" value="S1_domain"/>
</dbReference>
<dbReference type="InterPro" id="IPR004368">
    <property type="entry name" value="TIF_IF1"/>
</dbReference>
<dbReference type="NCBIfam" id="TIGR00008">
    <property type="entry name" value="infA"/>
    <property type="match status" value="1"/>
</dbReference>
<dbReference type="PANTHER" id="PTHR33370">
    <property type="entry name" value="TRANSLATION INITIATION FACTOR IF-1, CHLOROPLASTIC"/>
    <property type="match status" value="1"/>
</dbReference>
<dbReference type="PANTHER" id="PTHR33370:SF1">
    <property type="entry name" value="TRANSLATION INITIATION FACTOR IF-1, CHLOROPLASTIC"/>
    <property type="match status" value="1"/>
</dbReference>
<dbReference type="Pfam" id="PF01176">
    <property type="entry name" value="eIF-1a"/>
    <property type="match status" value="1"/>
</dbReference>
<dbReference type="SMART" id="SM00316">
    <property type="entry name" value="S1"/>
    <property type="match status" value="1"/>
</dbReference>
<dbReference type="SUPFAM" id="SSF50249">
    <property type="entry name" value="Nucleic acid-binding proteins"/>
    <property type="match status" value="1"/>
</dbReference>
<dbReference type="PROSITE" id="PS50832">
    <property type="entry name" value="S1_IF1_TYPE"/>
    <property type="match status" value="1"/>
</dbReference>
<name>IF1_BRUSI</name>
<evidence type="ECO:0000255" key="1">
    <source>
        <dbReference type="HAMAP-Rule" id="MF_00075"/>
    </source>
</evidence>
<reference key="1">
    <citation type="submission" date="2007-12" db="EMBL/GenBank/DDBJ databases">
        <title>Brucella suis ATCC 23445 whole genome shotgun sequencing project.</title>
        <authorList>
            <person name="Setubal J.C."/>
            <person name="Bowns C."/>
            <person name="Boyle S."/>
            <person name="Crasta O.R."/>
            <person name="Czar M.J."/>
            <person name="Dharmanolla C."/>
            <person name="Gillespie J.J."/>
            <person name="Kenyon R.W."/>
            <person name="Lu J."/>
            <person name="Mane S."/>
            <person name="Mohapatra S."/>
            <person name="Nagrani S."/>
            <person name="Purkayastha A."/>
            <person name="Rajasimha H.K."/>
            <person name="Shallom J.M."/>
            <person name="Shallom S."/>
            <person name="Shukla M."/>
            <person name="Snyder E.E."/>
            <person name="Sobral B.W."/>
            <person name="Wattam A.R."/>
            <person name="Will R."/>
            <person name="Williams K."/>
            <person name="Yoo H."/>
            <person name="Bruce D."/>
            <person name="Detter C."/>
            <person name="Munk C."/>
            <person name="Brettin T.S."/>
        </authorList>
    </citation>
    <scope>NUCLEOTIDE SEQUENCE [LARGE SCALE GENOMIC DNA]</scope>
    <source>
        <strain>ATCC 23445 / NCTC 10510</strain>
    </source>
</reference>
<organism>
    <name type="scientific">Brucella suis (strain ATCC 23445 / NCTC 10510)</name>
    <dbReference type="NCBI Taxonomy" id="470137"/>
    <lineage>
        <taxon>Bacteria</taxon>
        <taxon>Pseudomonadati</taxon>
        <taxon>Pseudomonadota</taxon>
        <taxon>Alphaproteobacteria</taxon>
        <taxon>Hyphomicrobiales</taxon>
        <taxon>Brucellaceae</taxon>
        <taxon>Brucella/Ochrobactrum group</taxon>
        <taxon>Brucella</taxon>
    </lineage>
</organism>
<keyword id="KW-0963">Cytoplasm</keyword>
<keyword id="KW-0396">Initiation factor</keyword>
<keyword id="KW-0648">Protein biosynthesis</keyword>
<keyword id="KW-0694">RNA-binding</keyword>
<keyword id="KW-0699">rRNA-binding</keyword>